<dbReference type="EC" id="5.6.1.3" evidence="8 10"/>
<dbReference type="EMBL" id="D17577">
    <property type="protein sequence ID" value="BAA04503.1"/>
    <property type="molecule type" value="mRNA"/>
</dbReference>
<dbReference type="EMBL" id="AF090190">
    <property type="protein sequence ID" value="AAF06718.1"/>
    <property type="molecule type" value="mRNA"/>
</dbReference>
<dbReference type="EMBL" id="AF131865">
    <property type="protein sequence ID" value="AAD39438.1"/>
    <property type="molecule type" value="mRNA"/>
</dbReference>
<dbReference type="EMBL" id="AB023656">
    <property type="protein sequence ID" value="BAA75243.1"/>
    <property type="molecule type" value="mRNA"/>
</dbReference>
<dbReference type="CCDS" id="CCDS18956.1">
    <molecule id="Q60575-2"/>
</dbReference>
<dbReference type="CCDS" id="CCDS18957.1">
    <molecule id="Q60575-3"/>
</dbReference>
<dbReference type="CCDS" id="CCDS71521.1">
    <molecule id="Q60575-1"/>
</dbReference>
<dbReference type="PIR" id="A55289">
    <property type="entry name" value="A55289"/>
</dbReference>
<dbReference type="RefSeq" id="NP_001277924.1">
    <molecule id="Q60575-1"/>
    <property type="nucleotide sequence ID" value="NM_001290995.1"/>
</dbReference>
<dbReference type="RefSeq" id="NP_032467.2">
    <property type="nucleotide sequence ID" value="NM_008441.2"/>
</dbReference>
<dbReference type="RefSeq" id="NP_997565.2">
    <molecule id="Q60575-2"/>
    <property type="nucleotide sequence ID" value="NM_207682.2"/>
</dbReference>
<dbReference type="SMR" id="Q60575"/>
<dbReference type="BioGRID" id="200936">
    <property type="interactions" value="13"/>
</dbReference>
<dbReference type="FunCoup" id="Q60575">
    <property type="interactions" value="1284"/>
</dbReference>
<dbReference type="IntAct" id="Q60575">
    <property type="interactions" value="6"/>
</dbReference>
<dbReference type="STRING" id="10090.ENSMUSP00000056754"/>
<dbReference type="GlyGen" id="Q60575">
    <property type="glycosylation" value="1 site, 1 O-linked glycan (1 site)"/>
</dbReference>
<dbReference type="iPTMnet" id="Q60575"/>
<dbReference type="PhosphoSitePlus" id="Q60575"/>
<dbReference type="SwissPalm" id="Q60575"/>
<dbReference type="jPOST" id="Q60575"/>
<dbReference type="PaxDb" id="10090-ENSMUSP00000061472"/>
<dbReference type="PeptideAtlas" id="Q60575"/>
<dbReference type="ProteomicsDB" id="263600">
    <molecule id="Q60575-1"/>
</dbReference>
<dbReference type="ProteomicsDB" id="263601">
    <molecule id="Q60575-2"/>
</dbReference>
<dbReference type="ProteomicsDB" id="263602">
    <molecule id="Q60575-3"/>
</dbReference>
<dbReference type="Pumba" id="Q60575"/>
<dbReference type="Antibodypedia" id="4196">
    <property type="antibodies" value="111 antibodies from 25 providers"/>
</dbReference>
<dbReference type="DNASU" id="16561"/>
<dbReference type="Ensembl" id="ENSMUST00000055647.15">
    <molecule id="Q60575-2"/>
    <property type="protein sequence ID" value="ENSMUSP00000061472.9"/>
    <property type="gene ID" value="ENSMUSG00000063077.16"/>
</dbReference>
<dbReference type="Ensembl" id="ENSMUST00000060537.13">
    <molecule id="Q60575-1"/>
    <property type="protein sequence ID" value="ENSMUSP00000056754.7"/>
    <property type="gene ID" value="ENSMUSG00000063077.16"/>
</dbReference>
<dbReference type="GeneID" id="16561"/>
<dbReference type="KEGG" id="mmu:16561"/>
<dbReference type="UCSC" id="uc008vvy.2">
    <molecule id="Q60575-2"/>
    <property type="organism name" value="mouse"/>
</dbReference>
<dbReference type="UCSC" id="uc008vvz.2">
    <molecule id="Q60575-1"/>
    <property type="organism name" value="mouse"/>
</dbReference>
<dbReference type="AGR" id="MGI:108426"/>
<dbReference type="CTD" id="23095"/>
<dbReference type="MGI" id="MGI:108426">
    <property type="gene designation" value="Kif1b"/>
</dbReference>
<dbReference type="VEuPathDB" id="HostDB:ENSMUSG00000063077"/>
<dbReference type="eggNOG" id="KOG0245">
    <property type="taxonomic scope" value="Eukaryota"/>
</dbReference>
<dbReference type="GeneTree" id="ENSGT00940000157445"/>
<dbReference type="HOGENOM" id="CLU_001485_10_0_1"/>
<dbReference type="InParanoid" id="Q60575"/>
<dbReference type="OMA" id="IKITICH"/>
<dbReference type="OrthoDB" id="48637at9989"/>
<dbReference type="PhylomeDB" id="Q60575"/>
<dbReference type="TreeFam" id="TF105221"/>
<dbReference type="Reactome" id="R-MMU-2132295">
    <property type="pathway name" value="MHC class II antigen presentation"/>
</dbReference>
<dbReference type="Reactome" id="R-MMU-6811434">
    <property type="pathway name" value="COPI-dependent Golgi-to-ER retrograde traffic"/>
</dbReference>
<dbReference type="Reactome" id="R-MMU-983189">
    <property type="pathway name" value="Kinesins"/>
</dbReference>
<dbReference type="BioGRID-ORCS" id="16561">
    <property type="hits" value="3 hits in 79 CRISPR screens"/>
</dbReference>
<dbReference type="CD-CODE" id="CE726F99">
    <property type="entry name" value="Postsynaptic density"/>
</dbReference>
<dbReference type="ChiTaRS" id="Kif1b">
    <property type="organism name" value="mouse"/>
</dbReference>
<dbReference type="PRO" id="PR:Q60575"/>
<dbReference type="Proteomes" id="UP000000589">
    <property type="component" value="Chromosome 4"/>
</dbReference>
<dbReference type="RNAct" id="Q60575">
    <property type="molecule type" value="protein"/>
</dbReference>
<dbReference type="Bgee" id="ENSMUSG00000063077">
    <property type="expression patterns" value="Expressed in pigmented layer of retina and 274 other cell types or tissues"/>
</dbReference>
<dbReference type="ExpressionAtlas" id="Q60575">
    <property type="expression patterns" value="baseline and differential"/>
</dbReference>
<dbReference type="GO" id="GO:1904115">
    <property type="term" value="C:axon cytoplasm"/>
    <property type="evidence" value="ECO:0007669"/>
    <property type="project" value="GOC"/>
</dbReference>
<dbReference type="GO" id="GO:0031410">
    <property type="term" value="C:cytoplasmic vesicle"/>
    <property type="evidence" value="ECO:0000250"/>
    <property type="project" value="UniProtKB"/>
</dbReference>
<dbReference type="GO" id="GO:0005874">
    <property type="term" value="C:microtubule"/>
    <property type="evidence" value="ECO:0007669"/>
    <property type="project" value="UniProtKB-KW"/>
</dbReference>
<dbReference type="GO" id="GO:0005739">
    <property type="term" value="C:mitochondrion"/>
    <property type="evidence" value="ECO:0000314"/>
    <property type="project" value="MGI"/>
</dbReference>
<dbReference type="GO" id="GO:0043005">
    <property type="term" value="C:neuron projection"/>
    <property type="evidence" value="ECO:0000250"/>
    <property type="project" value="UniProtKB"/>
</dbReference>
<dbReference type="GO" id="GO:0098794">
    <property type="term" value="C:postsynapse"/>
    <property type="evidence" value="ECO:0000314"/>
    <property type="project" value="SynGO"/>
</dbReference>
<dbReference type="GO" id="GO:0098793">
    <property type="term" value="C:presynapse"/>
    <property type="evidence" value="ECO:0000314"/>
    <property type="project" value="SynGO"/>
</dbReference>
<dbReference type="GO" id="GO:0030672">
    <property type="term" value="C:synaptic vesicle membrane"/>
    <property type="evidence" value="ECO:0000314"/>
    <property type="project" value="UniProtKB"/>
</dbReference>
<dbReference type="GO" id="GO:0005524">
    <property type="term" value="F:ATP binding"/>
    <property type="evidence" value="ECO:0007669"/>
    <property type="project" value="UniProtKB-KW"/>
</dbReference>
<dbReference type="GO" id="GO:0008017">
    <property type="term" value="F:microtubule binding"/>
    <property type="evidence" value="ECO:0000304"/>
    <property type="project" value="UniProtKB"/>
</dbReference>
<dbReference type="GO" id="GO:0008574">
    <property type="term" value="F:plus-end-directed microtubule motor activity"/>
    <property type="evidence" value="ECO:0000314"/>
    <property type="project" value="UniProtKB"/>
</dbReference>
<dbReference type="GO" id="GO:0048490">
    <property type="term" value="P:anterograde synaptic vesicle transport"/>
    <property type="evidence" value="ECO:0000315"/>
    <property type="project" value="UniProtKB"/>
</dbReference>
<dbReference type="GO" id="GO:0009792">
    <property type="term" value="P:embryo development ending in birth or egg hatching"/>
    <property type="evidence" value="ECO:0000303"/>
    <property type="project" value="UniProtKB"/>
</dbReference>
<dbReference type="GO" id="GO:0047497">
    <property type="term" value="P:mitochondrion transport along microtubule"/>
    <property type="evidence" value="ECO:0000314"/>
    <property type="project" value="UniProtKB"/>
</dbReference>
<dbReference type="GO" id="GO:0007274">
    <property type="term" value="P:neuromuscular synaptic transmission"/>
    <property type="evidence" value="ECO:0000315"/>
    <property type="project" value="UniProtKB"/>
</dbReference>
<dbReference type="GO" id="GO:0007270">
    <property type="term" value="P:neuron-neuron synaptic transmission"/>
    <property type="evidence" value="ECO:0000315"/>
    <property type="project" value="UniProtKB"/>
</dbReference>
<dbReference type="GO" id="GO:0047496">
    <property type="term" value="P:vesicle transport along microtubule"/>
    <property type="evidence" value="ECO:0007669"/>
    <property type="project" value="UniProtKB-ARBA"/>
</dbReference>
<dbReference type="CDD" id="cd22727">
    <property type="entry name" value="FHA_KIF1B"/>
    <property type="match status" value="1"/>
</dbReference>
<dbReference type="CDD" id="cd01365">
    <property type="entry name" value="KISc_KIF1A_KIF1B"/>
    <property type="match status" value="1"/>
</dbReference>
<dbReference type="CDD" id="cd01233">
    <property type="entry name" value="PH_KIFIA_KIFIB"/>
    <property type="match status" value="1"/>
</dbReference>
<dbReference type="FunFam" id="2.30.29.30:FF:000023">
    <property type="entry name" value="Kinesin family member 1B"/>
    <property type="match status" value="1"/>
</dbReference>
<dbReference type="FunFam" id="2.60.200.20:FF:000001">
    <property type="entry name" value="Kinesin family member 1B"/>
    <property type="match status" value="1"/>
</dbReference>
<dbReference type="FunFam" id="3.40.850.10:FF:000004">
    <property type="entry name" value="Kinesin-like protein isoform 2"/>
    <property type="match status" value="1"/>
</dbReference>
<dbReference type="Gene3D" id="2.60.200.20">
    <property type="match status" value="1"/>
</dbReference>
<dbReference type="Gene3D" id="6.10.250.2520">
    <property type="match status" value="1"/>
</dbReference>
<dbReference type="Gene3D" id="3.40.850.10">
    <property type="entry name" value="Kinesin motor domain"/>
    <property type="match status" value="1"/>
</dbReference>
<dbReference type="Gene3D" id="2.30.29.30">
    <property type="entry name" value="Pleckstrin-homology domain (PH domain)/Phosphotyrosine-binding domain (PTB)"/>
    <property type="match status" value="1"/>
</dbReference>
<dbReference type="InterPro" id="IPR000253">
    <property type="entry name" value="FHA_dom"/>
</dbReference>
<dbReference type="InterPro" id="IPR022164">
    <property type="entry name" value="Kinesin-like"/>
</dbReference>
<dbReference type="InterPro" id="IPR022140">
    <property type="entry name" value="Kinesin-like_KIF1-typ"/>
</dbReference>
<dbReference type="InterPro" id="IPR032405">
    <property type="entry name" value="Kinesin_assoc"/>
</dbReference>
<dbReference type="InterPro" id="IPR019821">
    <property type="entry name" value="Kinesin_motor_CS"/>
</dbReference>
<dbReference type="InterPro" id="IPR001752">
    <property type="entry name" value="Kinesin_motor_dom"/>
</dbReference>
<dbReference type="InterPro" id="IPR036961">
    <property type="entry name" value="Kinesin_motor_dom_sf"/>
</dbReference>
<dbReference type="InterPro" id="IPR027417">
    <property type="entry name" value="P-loop_NTPase"/>
</dbReference>
<dbReference type="InterPro" id="IPR011993">
    <property type="entry name" value="PH-like_dom_sf"/>
</dbReference>
<dbReference type="InterPro" id="IPR001849">
    <property type="entry name" value="PH_domain"/>
</dbReference>
<dbReference type="InterPro" id="IPR049780">
    <property type="entry name" value="PH_KIFIA_KIFIB"/>
</dbReference>
<dbReference type="InterPro" id="IPR008984">
    <property type="entry name" value="SMAD_FHA_dom_sf"/>
</dbReference>
<dbReference type="PANTHER" id="PTHR47117:SF4">
    <property type="entry name" value="KINESIN-LIKE PROTEIN KIF1B ISOFORM X1"/>
    <property type="match status" value="1"/>
</dbReference>
<dbReference type="PANTHER" id="PTHR47117">
    <property type="entry name" value="STAR-RELATED LIPID TRANSFER PROTEIN 9"/>
    <property type="match status" value="1"/>
</dbReference>
<dbReference type="Pfam" id="PF12473">
    <property type="entry name" value="DUF3694"/>
    <property type="match status" value="1"/>
</dbReference>
<dbReference type="Pfam" id="PF00498">
    <property type="entry name" value="FHA"/>
    <property type="match status" value="1"/>
</dbReference>
<dbReference type="Pfam" id="PF12423">
    <property type="entry name" value="KIF1B"/>
    <property type="match status" value="1"/>
</dbReference>
<dbReference type="Pfam" id="PF00225">
    <property type="entry name" value="Kinesin"/>
    <property type="match status" value="1"/>
</dbReference>
<dbReference type="Pfam" id="PF16183">
    <property type="entry name" value="Kinesin_assoc"/>
    <property type="match status" value="1"/>
</dbReference>
<dbReference type="Pfam" id="PF00169">
    <property type="entry name" value="PH"/>
    <property type="match status" value="1"/>
</dbReference>
<dbReference type="PRINTS" id="PR00380">
    <property type="entry name" value="KINESINHEAVY"/>
</dbReference>
<dbReference type="SMART" id="SM00240">
    <property type="entry name" value="FHA"/>
    <property type="match status" value="1"/>
</dbReference>
<dbReference type="SMART" id="SM00129">
    <property type="entry name" value="KISc"/>
    <property type="match status" value="1"/>
</dbReference>
<dbReference type="SMART" id="SM00233">
    <property type="entry name" value="PH"/>
    <property type="match status" value="1"/>
</dbReference>
<dbReference type="SUPFAM" id="SSF52540">
    <property type="entry name" value="P-loop containing nucleoside triphosphate hydrolases"/>
    <property type="match status" value="1"/>
</dbReference>
<dbReference type="SUPFAM" id="SSF50729">
    <property type="entry name" value="PH domain-like"/>
    <property type="match status" value="1"/>
</dbReference>
<dbReference type="SUPFAM" id="SSF49879">
    <property type="entry name" value="SMAD/FHA domain"/>
    <property type="match status" value="1"/>
</dbReference>
<dbReference type="PROSITE" id="PS50006">
    <property type="entry name" value="FHA_DOMAIN"/>
    <property type="match status" value="1"/>
</dbReference>
<dbReference type="PROSITE" id="PS00411">
    <property type="entry name" value="KINESIN_MOTOR_1"/>
    <property type="match status" value="1"/>
</dbReference>
<dbReference type="PROSITE" id="PS50067">
    <property type="entry name" value="KINESIN_MOTOR_2"/>
    <property type="match status" value="1"/>
</dbReference>
<dbReference type="PROSITE" id="PS50003">
    <property type="entry name" value="PH_DOMAIN"/>
    <property type="match status" value="1"/>
</dbReference>
<name>KIF1B_MOUSE</name>
<accession>Q60575</accession>
<accession>Q9R0B4</accession>
<accession>Q9WVE5</accession>
<accession>Q9Z119</accession>
<reference key="1">
    <citation type="journal article" date="1994" name="Cell">
        <title>KIF1B, a novel microtubule plus end-directed monomeric motor protein for transport of mitochondria.</title>
        <authorList>
            <person name="Nangaku M."/>
            <person name="Sato-Yoshitake R."/>
            <person name="Okada Y."/>
            <person name="Noda Y."/>
            <person name="Takemura R."/>
            <person name="Yamazaki H."/>
            <person name="Hirokawa N."/>
        </authorList>
    </citation>
    <scope>NUCLEOTIDE SEQUENCE [MRNA] (ISOFORM 3)</scope>
    <scope>FUNCTION (ISOFORM 3)</scope>
    <scope>CATALYTIC ACTIVITY</scope>
    <scope>SUBUNIT</scope>
    <scope>SUBCELLULAR LOCATION (ISOFORM 3)</scope>
    <source>
        <tissue>Brain</tissue>
    </source>
</reference>
<reference key="2">
    <citation type="journal article" date="1999" name="Gene">
        <title>A novel kinesin of the UNC-104/KIF1 subfamily encoded by the Kif1b gene.</title>
        <authorList>
            <person name="Gong T.L."/>
            <person name="Winnicki R.S."/>
            <person name="Kohrman D.C."/>
            <person name="Lomax M.I."/>
        </authorList>
    </citation>
    <scope>NUCLEOTIDE SEQUENCE [MRNA] (ISOFORM 1)</scope>
    <source>
        <strain>ICR</strain>
        <tissue>Brain</tissue>
    </source>
</reference>
<reference key="3">
    <citation type="journal article" date="1999" name="Mamm. Genome">
        <title>The major brain isoform of kif1b lacks the putative mitochondria-binding domain.</title>
        <authorList>
            <person name="Conforti L."/>
            <person name="Buckmaster E.A."/>
            <person name="Tarlton A."/>
            <person name="Brown M.C."/>
            <person name="Lyon M.F."/>
            <person name="Perry V.H."/>
            <person name="Coleman M.P."/>
        </authorList>
    </citation>
    <scope>NUCLEOTIDE SEQUENCE [MRNA] (ISOFORM 1)</scope>
    <source>
        <strain>C57BL/6J</strain>
        <tissue>Brain</tissue>
    </source>
</reference>
<reference key="4">
    <citation type="journal article" date="2001" name="Cell">
        <title>Charcot-Marie-Tooth disease type 2A caused by mutation in a microtubule motor KIF1B-beta.</title>
        <authorList>
            <person name="Zhao C."/>
            <person name="Takita J."/>
            <person name="Tanaka Y."/>
            <person name="Setou M."/>
            <person name="Nakagawa T."/>
            <person name="Takeda S."/>
            <person name="Yang H.W."/>
            <person name="Terada S."/>
            <person name="Nakata T."/>
            <person name="Takei Y."/>
            <person name="Saito M."/>
            <person name="Tsuji S."/>
            <person name="Hayashi Y."/>
            <person name="Hirokawa N."/>
        </authorList>
    </citation>
    <scope>NUCLEOTIDE SEQUENCE [MRNA] (ISOFORM 2)</scope>
    <scope>FUNCTION (ISOFORM 2)</scope>
    <scope>CATALYTIC ACTIVITY</scope>
    <scope>SUBCELLULAR LOCATION (ISOFORM 2)</scope>
    <scope>DISRUPTION PHENOTYPE</scope>
    <scope>MUTAGENESIS OF GLN-98</scope>
    <source>
        <strain>ICR</strain>
    </source>
</reference>
<reference key="5">
    <citation type="journal article" date="2007" name="Proc. Natl. Acad. Sci. U.S.A.">
        <title>Large-scale phosphorylation analysis of mouse liver.</title>
        <authorList>
            <person name="Villen J."/>
            <person name="Beausoleil S.A."/>
            <person name="Gerber S.A."/>
            <person name="Gygi S.P."/>
        </authorList>
    </citation>
    <scope>PHOSPHORYLATION [LARGE SCALE ANALYSIS] AT SER-1487</scope>
    <scope>IDENTIFICATION BY MASS SPECTROMETRY [LARGE SCALE ANALYSIS]</scope>
    <source>
        <tissue>Liver</tissue>
    </source>
</reference>
<reference key="6">
    <citation type="journal article" date="2008" name="J. Proteome Res.">
        <title>Specific phosphopeptide enrichment with immobilized titanium ion affinity chromatography adsorbent for phosphoproteome analysis.</title>
        <authorList>
            <person name="Zhou H."/>
            <person name="Ye M."/>
            <person name="Dong J."/>
            <person name="Han G."/>
            <person name="Jiang X."/>
            <person name="Wu R."/>
            <person name="Zou H."/>
        </authorList>
    </citation>
    <scope>PHOSPHORYLATION [LARGE SCALE ANALYSIS] AT SER-1454</scope>
    <scope>IDENTIFICATION BY MASS SPECTROMETRY [LARGE SCALE ANALYSIS]</scope>
    <source>
        <tissue>Liver</tissue>
    </source>
</reference>
<reference key="7">
    <citation type="journal article" date="2008" name="Nat. Cell Biol.">
        <title>KIF1Bbeta- and KIF1A-mediated axonal transport of presynaptic regulator Rab3 occurs in a GTP-dependent manner through DENN/MADD.</title>
        <authorList>
            <person name="Niwa S."/>
            <person name="Tanaka Y."/>
            <person name="Hirokawa N."/>
        </authorList>
    </citation>
    <scope>FUNCTION (ISOFORM 2)</scope>
    <scope>INTERACTION WITH MADD (ISOFORM 2)</scope>
    <scope>TISSUE SPECIFICITY</scope>
</reference>
<reference key="8">
    <citation type="journal article" date="2010" name="Cell">
        <title>A tissue-specific atlas of mouse protein phosphorylation and expression.</title>
        <authorList>
            <person name="Huttlin E.L."/>
            <person name="Jedrychowski M.P."/>
            <person name="Elias J.E."/>
            <person name="Goswami T."/>
            <person name="Rad R."/>
            <person name="Beausoleil S.A."/>
            <person name="Villen J."/>
            <person name="Haas W."/>
            <person name="Sowa M.E."/>
            <person name="Gygi S.P."/>
        </authorList>
    </citation>
    <scope>PHOSPHORYLATION [LARGE SCALE ANALYSIS] AT THR-647; THR-652; SER-1454 AND SER-1487</scope>
    <scope>IDENTIFICATION BY MASS SPECTROMETRY [LARGE SCALE ANALYSIS]</scope>
    <source>
        <tissue>Brain</tissue>
        <tissue>Brown adipose tissue</tissue>
        <tissue>Heart</tissue>
        <tissue>Kidney</tissue>
        <tissue>Liver</tissue>
        <tissue>Lung</tissue>
        <tissue>Pancreas</tissue>
        <tissue>Spleen</tissue>
        <tissue>Testis</tissue>
    </source>
</reference>
<keyword id="KW-0007">Acetylation</keyword>
<keyword id="KW-0025">Alternative splicing</keyword>
<keyword id="KW-0067">ATP-binding</keyword>
<keyword id="KW-0175">Coiled coil</keyword>
<keyword id="KW-0963">Cytoplasm</keyword>
<keyword id="KW-0968">Cytoplasmic vesicle</keyword>
<keyword id="KW-0206">Cytoskeleton</keyword>
<keyword id="KW-0413">Isomerase</keyword>
<keyword id="KW-0472">Membrane</keyword>
<keyword id="KW-0493">Microtubule</keyword>
<keyword id="KW-0496">Mitochondrion</keyword>
<keyword id="KW-0505">Motor protein</keyword>
<keyword id="KW-0547">Nucleotide-binding</keyword>
<keyword id="KW-0597">Phosphoprotein</keyword>
<keyword id="KW-1185">Reference proteome</keyword>
<keyword id="KW-0770">Synapse</keyword>
<gene>
    <name evidence="16" type="primary">Kif1b</name>
</gene>
<evidence type="ECO:0000250" key="1">
    <source>
        <dbReference type="UniProtKB" id="O60333"/>
    </source>
</evidence>
<evidence type="ECO:0000250" key="2">
    <source>
        <dbReference type="UniProtKB" id="O88658"/>
    </source>
</evidence>
<evidence type="ECO:0000255" key="3"/>
<evidence type="ECO:0000255" key="4">
    <source>
        <dbReference type="PROSITE-ProRule" id="PRU00086"/>
    </source>
</evidence>
<evidence type="ECO:0000255" key="5">
    <source>
        <dbReference type="PROSITE-ProRule" id="PRU00145"/>
    </source>
</evidence>
<evidence type="ECO:0000255" key="6">
    <source>
        <dbReference type="PROSITE-ProRule" id="PRU00283"/>
    </source>
</evidence>
<evidence type="ECO:0000256" key="7">
    <source>
        <dbReference type="SAM" id="MobiDB-lite"/>
    </source>
</evidence>
<evidence type="ECO:0000269" key="8">
    <source>
    </source>
</evidence>
<evidence type="ECO:0000269" key="9">
    <source>
    </source>
</evidence>
<evidence type="ECO:0000269" key="10">
    <source>
    </source>
</evidence>
<evidence type="ECO:0000303" key="11">
    <source>
    </source>
</evidence>
<evidence type="ECO:0000303" key="12">
    <source>
    </source>
</evidence>
<evidence type="ECO:0000305" key="13"/>
<evidence type="ECO:0000305" key="14">
    <source>
    </source>
</evidence>
<evidence type="ECO:0000305" key="15">
    <source>
    </source>
</evidence>
<evidence type="ECO:0000312" key="16">
    <source>
        <dbReference type="MGI" id="MGI:108426"/>
    </source>
</evidence>
<evidence type="ECO:0007744" key="17">
    <source>
    </source>
</evidence>
<evidence type="ECO:0007744" key="18">
    <source>
    </source>
</evidence>
<evidence type="ECO:0007744" key="19">
    <source>
    </source>
</evidence>
<organism>
    <name type="scientific">Mus musculus</name>
    <name type="common">Mouse</name>
    <dbReference type="NCBI Taxonomy" id="10090"/>
    <lineage>
        <taxon>Eukaryota</taxon>
        <taxon>Metazoa</taxon>
        <taxon>Chordata</taxon>
        <taxon>Craniata</taxon>
        <taxon>Vertebrata</taxon>
        <taxon>Euteleostomi</taxon>
        <taxon>Mammalia</taxon>
        <taxon>Eutheria</taxon>
        <taxon>Euarchontoglires</taxon>
        <taxon>Glires</taxon>
        <taxon>Rodentia</taxon>
        <taxon>Myomorpha</taxon>
        <taxon>Muroidea</taxon>
        <taxon>Muridae</taxon>
        <taxon>Murinae</taxon>
        <taxon>Mus</taxon>
        <taxon>Mus</taxon>
    </lineage>
</organism>
<proteinExistence type="evidence at protein level"/>
<sequence length="1816" mass="204081">MSGASVKVAVRVRPFNSRETSKESKCIIQMQGNSTSIINPKNPKEAPKSFSFDYSYWSHTSPEDPCFASQNRVYNDIGKEMLLHAFEGYNVCIFAYGQTGAGKSYTMMGKQEESQAGIIPQLCEELFEKINDNCNEEMSYSVEVSYMEIYCERVRDLLNPKNKGNLRVREHPLLGPYVEDLSKLAVTSYTDIADLMDAGNKARTVAATNMNETSSRSHAVFTIVFTQKKQDPETNLSTEKVSKISLVDLAGSERADSTGAKGTRLKEGANINKSLTTLGKVISALAEVDNCTSKSKKKKKTDFIPYRDSVLTWLLRENLGGNSRTAMVAALSPADINYDETLSTLRYADRAKQIKCNAVINEDPNAKLVRELKEEVTRLKDLLRAQGLGDIIDIDPLIDDYSGSGGKYLKDFQNNKHRYLLASENQRPGNFSTASMGSLTSSPSSCSLNSQVGLTSVTSIQERIMSTPGGEEAIERLKESEKIIAELNETWEEKLRKTEAIRMEREALLAEMGVAIREDGGTLGVFSPKKTPHLVNLNEDPLMSECLLYYIKDGITRVGQADAERRQDIVLSGAHIKEEHCLFRSERSNTGEVIVTLEPCERSETYVNGKRVAHPVQLRSGNRIIMGKNHVFRFNHPEQARAEREKTPSAETPSEPVDWTFAQRELLEKQGIDMKQEMEKRLQEMEILYKKEKEEADLLLEQQRLDYESKLQALQRQVETRSLAAETTEEEEEEEEVPWTQHEFELAQWAFRKWKSHQFTSLRDLLWGNAVYLKEANAISVELKKKVQFQFVLLTDTLYSPVPPELLPSEMEKTHEDRPFPRTVVAVEVQDLKNGATHYWSLDKLKQRLDLMREMYDRAGEVASSAQDDSETTMTGSDPFYDRFHWFKLVGSSPIFHGCVNERLADRTPSPTFSTADSDITELADEQQDAMEDFDDEAFVDDTGSDAGTEEGSELFSDGHDPFYDRSPWFILVGRAFVYLSNLLYPVPLIHRVAIVSEKGEVRGFLRVAVQAIAADEEAPDYGSGIRQSGTAKISFDNEYFNQSDFSSAAMTRSGLSLEELRIVEGQGQSSEVISPPEEVNRMNDLDLKSGTLLDGKMVMEGFSEEIGNHLKLGSAFTFRVTVLQASGILPEYADIFCQFNFLHRHDEAFSTEPLKNNGRGSPLGFYHVQNIAVEVTESFVDYIKTKPIVFEVFGHYQQHPLHLQGQDLNSPPQPSRRFFPPPMPLSKPVPATKLNTMNKTTLGQSMSKYDLLVWFEISELEPTGEYIPAVVDHTAGLPCQGTFLLHQGIQRRITVTIIHEKGSELHWKDVRELVVGRIRNKPEVDEAAVDAVLSLNIISAKSLKAAHSSSRTFYRFEAVWDSSLHNSLLLNRVTPYGEKIYMTLSAYLELDHCIQPAVITKDVCMVFYSRDAKISPPRSLRNLFGSGYSKSPDSNRVTGIYELSLCKMADTGSPGMQRRRRKVLDTSVAYVRGEENLAGWRPRGDSLILEHQWELEKLELLHEVEKTRHFLLLRERLGDSVPKSLSDSLSPSLSSGTLSTSTSISSQISTTTFESAITPSESSGYDSADVESLVDREKELATKCLQLLTHTFNREFSQVHGSISDCKLSDISPIGRDPSVSSFSSSTLTPSSTCPSLVDSRSSSMDQKTPEANSRASSPCQEFEQFQIVPTVETPYLARAGKNEFLNLVPDIEEVRAGSVVSKKGYLHFKEPLSSNWAKHFVVVRRPYVFIYNSDKDPVERGIINLSTAQVEYSEDQQAMVKTPNTFAVCTKHRGVLLQALNDKDMNDWLYAFNPLLAGTIRSKLSRRCPSQPKY</sequence>
<protein>
    <recommendedName>
        <fullName evidence="15">Kinesin-like protein KIF1B</fullName>
        <ecNumber evidence="8 10">5.6.1.3</ecNumber>
    </recommendedName>
</protein>
<comment type="function">
    <text evidence="8 10">Has a plus-end-directed microtubule motor activity and functions as a motor for transport of vesicles and organelles along microtubules.</text>
</comment>
<comment type="function">
    <molecule>Isoform 2</molecule>
    <text evidence="1 8 9">Has a plus-end-directed microtubule motor activity and functions as a motor for anterograde synaptic vesicle transport along axonal microtubules from the cell body to the presynapse in neuronal cells (PubMed:11389829, PubMed:18849981). Functions as a downstream effector in a developmental apoptotic pathway that is activated when nerve growth factor (NGF) becomes limiting for neuronal progenitor cells (By similarity).</text>
</comment>
<comment type="function">
    <molecule>Isoform 3</molecule>
    <text evidence="10">Has a plus-end-directed microtubule motor activity and functions as a motor for anterograde transport of mitochondria.</text>
</comment>
<comment type="catalytic activity">
    <reaction evidence="8 10">
        <text>ATP + H2O + a kinesin associated with a microtubule at position (n) = ADP + phosphate a kinesin associated with a microtubule at position (n+1, toward the plus end).</text>
        <dbReference type="EC" id="5.6.1.3"/>
    </reaction>
</comment>
<comment type="subunit">
    <text evidence="1 2 10">Monomer (PubMed:7528108). Interacts with KIFBP; positively regulates KIF1B microtubule motor activity (By similarity). Interacts (via C-terminus end of the kinesin-motor domain) with CHP1; the interaction occurs in a calcium-dependent manner (By similarity).</text>
</comment>
<comment type="subunit">
    <molecule>Isoform 2</molecule>
    <text evidence="9">Interacts with MADD (via death domain); links this isoform to Rab3-carrying vesicles in anterograde synaptic vesicle transport.</text>
</comment>
<comment type="subcellular location">
    <subcellularLocation>
        <location evidence="14 15">Cytoplasm</location>
        <location evidence="14 15">Cytoskeleton</location>
    </subcellularLocation>
    <text evidence="8 10">Has a plus-end-directed microtubule motor activity and therefore associates with microtubules.</text>
</comment>
<comment type="subcellular location">
    <molecule>Isoform 2</molecule>
    <subcellularLocation>
        <location evidence="8">Cytoplasmic vesicle</location>
        <location evidence="8">Secretory vesicle</location>
        <location evidence="8">Synaptic vesicle membrane</location>
    </subcellularLocation>
    <text evidence="8">Associates with synaptic vesicles and mediates their anterograde transport along axonal microtubules.</text>
</comment>
<comment type="subcellular location">
    <molecule>Isoform 3</molecule>
    <subcellularLocation>
        <location evidence="15">Mitochondrion</location>
    </subcellularLocation>
    <text evidence="10">Associates with mitochondria and mediates their movement along microtubules.</text>
</comment>
<comment type="alternative products">
    <event type="alternative splicing"/>
    <isoform>
        <id>Q60575-1</id>
        <name>1</name>
        <sequence type="displayed"/>
    </isoform>
    <isoform>
        <id>Q60575-2</id>
        <name>2</name>
        <name evidence="11">KIF1Bbeta</name>
        <sequence type="described" ref="VSP_002862 VSP_002863"/>
    </isoform>
    <isoform>
        <id>Q60575-3</id>
        <name>3</name>
        <name evidence="11">KIF1Balpha</name>
        <sequence type="described" ref="VSP_002862 VSP_002863 VSP_002864 VSP_002865"/>
    </isoform>
</comment>
<comment type="tissue specificity">
    <text evidence="9">Expressed in the brain (at protein level).</text>
</comment>
<comment type="disruption phenotype">
    <text evidence="8">Knockout pups were delivered in normal Mendelian ratios but displayed multiple neurological abnormalities and died within minutes after birth (PubMed:11389829). They display an overall reduction of motosensory neural function. The cellularity, organization, and development of the brain stem nuclei and commissural fibers are significantly affected (PubMed:11389829).</text>
</comment>
<comment type="similarity">
    <text evidence="6">Belongs to the TRAFAC class myosin-kinesin ATPase superfamily. Kinesin family. Unc-104 subfamily.</text>
</comment>
<feature type="initiator methionine" description="Removed" evidence="1">
    <location>
        <position position="1"/>
    </location>
</feature>
<feature type="chain" id="PRO_0000125408" description="Kinesin-like protein KIF1B">
    <location>
        <begin position="2"/>
        <end position="1816"/>
    </location>
</feature>
<feature type="domain" description="Kinesin motor" evidence="6">
    <location>
        <begin position="5"/>
        <end position="354"/>
    </location>
</feature>
<feature type="domain" description="FHA" evidence="4">
    <location>
        <begin position="556"/>
        <end position="612"/>
    </location>
</feature>
<feature type="domain" description="PH" evidence="5">
    <location>
        <begin position="1702"/>
        <end position="1799"/>
    </location>
</feature>
<feature type="region of interest" description="Interaction with KIFBP" evidence="1">
    <location>
        <begin position="270"/>
        <end position="350"/>
    </location>
</feature>
<feature type="region of interest" description="Disordered" evidence="7">
    <location>
        <begin position="1522"/>
        <end position="1571"/>
    </location>
</feature>
<feature type="region of interest" description="Disordered" evidence="7">
    <location>
        <begin position="1620"/>
        <end position="1659"/>
    </location>
</feature>
<feature type="coiled-coil region" evidence="3">
    <location>
        <begin position="365"/>
        <end position="386"/>
    </location>
</feature>
<feature type="coiled-coil region" evidence="3">
    <location>
        <begin position="470"/>
        <end position="502"/>
    </location>
</feature>
<feature type="coiled-coil region" evidence="3">
    <location>
        <begin position="668"/>
        <end position="737"/>
    </location>
</feature>
<feature type="coiled-coil region" evidence="3">
    <location>
        <begin position="841"/>
        <end position="869"/>
    </location>
</feature>
<feature type="compositionally biased region" description="Low complexity" evidence="7">
    <location>
        <begin position="1525"/>
        <end position="1553"/>
    </location>
</feature>
<feature type="compositionally biased region" description="Polar residues" evidence="7">
    <location>
        <begin position="1554"/>
        <end position="1566"/>
    </location>
</feature>
<feature type="compositionally biased region" description="Low complexity" evidence="7">
    <location>
        <begin position="1620"/>
        <end position="1637"/>
    </location>
</feature>
<feature type="compositionally biased region" description="Polar residues" evidence="7">
    <location>
        <begin position="1640"/>
        <end position="1659"/>
    </location>
</feature>
<feature type="binding site" evidence="6">
    <location>
        <begin position="97"/>
        <end position="104"/>
    </location>
    <ligand>
        <name>ATP</name>
        <dbReference type="ChEBI" id="CHEBI:30616"/>
    </ligand>
</feature>
<feature type="modified residue" description="N-acetylserine" evidence="1">
    <location>
        <position position="2"/>
    </location>
</feature>
<feature type="modified residue" description="Phosphothreonine" evidence="19">
    <location>
        <position position="647"/>
    </location>
</feature>
<feature type="modified residue" description="Phosphothreonine" evidence="19">
    <location>
        <position position="652"/>
    </location>
</feature>
<feature type="modified residue" description="Phosphoserine" evidence="1">
    <location>
        <position position="1054"/>
    </location>
</feature>
<feature type="modified residue" description="Phosphoserine" evidence="1">
    <location>
        <position position="1057"/>
    </location>
</feature>
<feature type="modified residue" description="Phosphoserine" evidence="1">
    <location>
        <position position="1416"/>
    </location>
</feature>
<feature type="modified residue" description="Phosphoserine" evidence="18 19">
    <location>
        <position position="1454"/>
    </location>
</feature>
<feature type="modified residue" description="Phosphoserine" evidence="17 19">
    <location>
        <position position="1487"/>
    </location>
</feature>
<feature type="modified residue" description="Phosphoserine" evidence="1">
    <location>
        <position position="1573"/>
    </location>
</feature>
<feature type="modified residue" description="Phosphoserine" evidence="1">
    <location>
        <position position="1603"/>
    </location>
</feature>
<feature type="modified residue" description="Phosphoserine" evidence="1">
    <location>
        <position position="1610"/>
    </location>
</feature>
<feature type="modified residue" description="Phosphoserine" evidence="1">
    <location>
        <position position="1613"/>
    </location>
</feature>
<feature type="splice variant" id="VSP_002862" description="In isoform 2 and isoform 3." evidence="11 12">
    <location>
        <begin position="289"/>
        <end position="294"/>
    </location>
</feature>
<feature type="splice variant" id="VSP_002863" description="In isoform 2 and isoform 3." evidence="11 12">
    <original>IDPLIDDYSGSGGKYLKDFQNNKHRYLLASENQRPGNFSTA</original>
    <variation>T</variation>
    <location>
        <begin position="394"/>
        <end position="434"/>
    </location>
</feature>
<feature type="splice variant" id="VSP_002864" description="In isoform 3." evidence="12">
    <original>YESKLQALQRQVETRSLAAETTEEEEEEEEVPWTQHEFELAQWAFRKWKSHQFTSLRDLLWGNAVYLKEANAISVELKKKVQFQFVLLTDTLYSPVPPELLPSEMEKTHEDRPFPRTVVAVEVQDLKNGATHYWSLDKLKQRLDLMREMYDRAGEVASSAQDDSETTMTGSDPFYDRFHWFKLVGSSPIFHGCVNERLADRTPSPTFSTADSDITELADEQQDAMEDFDDEAFVDDTGSDAGTEEGSELFSDGHDPFYDRSPWFILVGRAFVYLSNLLYPVPLIHRVAIVSEKGEVRGFLRVAVQAIAADEEAPDYGSGIRQSGTAKISFDNEYFNQSDFSSAAMTRSGLSLEELRIVEGQGQSSEVISPPEEVNRMNDLDLKSGTLLDGKMVMEGFSEEIGNHLKLGSAFTFRVTVLQASGILPEYADIFCQFNFLHRHDEAFSTEPLKNNGRGSPLGFYHVQNIAVEVTESFVDYIKTKPIVFEVFGH</original>
    <variation>ADSDSGDDSDKRSCEESWKLITSLREKLPPSKLQTIVKKCGLPSSGKKREPIKMYQIPQRRRLSKDSKWVTISDLKIQAVKEICYEVALNDFRHSRQEIEALAIVKMKELCAMYGKKDPNERDSWRAVARDVWDTVGVGDEKIEDMMVTGKGGTDVDDLKVHIDKLEDILQEVKKQNNMKDEEIKVLRNKMLKMEKVLPLIGSQEQKSQGSHKTKEPLVAGANSVSDNGVSKGESGELGKEERVSQLMNGDPAFRRGRLRWMRQEQIRFKNLQQQEITKQLRRQNVPHRFIPPENRKPRFPFKSNPKHRNSWSPGTHIIITEDEVIELRIPKDEEGRKENKEESQEKVGRAASRDVQSAWGTRSQDHIQVSKQHISNQQPPPQLRWRSNSLNNGQPKTTRCQATASSESLNSHSGHPTADLQTFQAKRHIHQHRQPYCNYNTGGQVEGSTASCCQKQTDKPSHCNQFVTPPRMRRQFSAPNLKAGRETTV</variation>
    <location>
        <begin position="707"/>
        <end position="1196"/>
    </location>
</feature>
<feature type="splice variant" id="VSP_002865" description="In isoform 3." evidence="12">
    <location>
        <begin position="1197"/>
        <end position="1816"/>
    </location>
</feature>
<feature type="mutagenesis site" description="Loss of plus-end-directed microtubule motor activity. A consequence of the inhability to hydrolyze ATP." evidence="8">
    <original>Q</original>
    <variation>L</variation>
    <location>
        <position position="98"/>
    </location>
</feature>
<feature type="sequence conflict" description="In Ref. 1 and 2." evidence="13" ref="1 2">
    <original>G</original>
    <variation>V</variation>
    <location>
        <position position="117"/>
    </location>
</feature>
<feature type="sequence conflict" description="In Ref. 1; BAA04503." evidence="13" ref="1">
    <original>GGTL</original>
    <variation>RGDI</variation>
    <location>
        <begin position="520"/>
        <end position="523"/>
    </location>
</feature>
<feature type="sequence conflict" description="In Ref. 4; BAA75243." evidence="13" ref="4">
    <original>P</original>
    <variation>S</variation>
    <location>
        <position position="909"/>
    </location>
</feature>
<feature type="sequence conflict" description="In Ref. 3; AAD39438." evidence="13" ref="3">
    <original>KL</original>
    <variation>TW</variation>
    <location>
        <begin position="1608"/>
        <end position="1609"/>
    </location>
</feature>
<feature type="sequence conflict" description="In Ref. 3; AAD39438." evidence="13" ref="3">
    <original>I</original>
    <variation>V</variation>
    <location>
        <position position="1612"/>
    </location>
</feature>
<feature type="sequence conflict" description="In Ref. 4; BAA75243." evidence="13" ref="4">
    <original>D</original>
    <variation>G</variation>
    <location>
        <position position="1784"/>
    </location>
</feature>